<organism>
    <name type="scientific">Conus marmoreus</name>
    <name type="common">Marble cone</name>
    <dbReference type="NCBI Taxonomy" id="42752"/>
    <lineage>
        <taxon>Eukaryota</taxon>
        <taxon>Metazoa</taxon>
        <taxon>Spiralia</taxon>
        <taxon>Lophotrochozoa</taxon>
        <taxon>Mollusca</taxon>
        <taxon>Gastropoda</taxon>
        <taxon>Caenogastropoda</taxon>
        <taxon>Neogastropoda</taxon>
        <taxon>Conoidea</taxon>
        <taxon>Conidae</taxon>
        <taxon>Conus</taxon>
    </lineage>
</organism>
<comment type="subcellular location">
    <subcellularLocation>
        <location evidence="2">Secreted</location>
    </subcellularLocation>
</comment>
<comment type="tissue specificity">
    <text evidence="6">Expressed by the venom duct.</text>
</comment>
<comment type="domain">
    <text evidence="5">The cysteine framework is V (CC-CC).</text>
</comment>
<comment type="PTM">
    <text evidence="5">Contains 2 disulfide bonds that can be either 'C1-C3, C2-C4' or 'C1-C4, C2-C3', since these disulfide connectivities have been observed for conotoxins with cysteine framework V (for examples, see AC P0DQQ7 and AC P81755).</text>
</comment>
<comment type="mass spectrometry" mass="1828.69" method="Electrospray" evidence="2"/>
<comment type="similarity">
    <text evidence="5">Belongs to the conotoxin T superfamily.</text>
</comment>
<evidence type="ECO:0000255" key="1"/>
<evidence type="ECO:0000269" key="2">
    <source>
    </source>
</evidence>
<evidence type="ECO:0000303" key="3">
    <source>
    </source>
</evidence>
<evidence type="ECO:0000303" key="4">
    <source>
    </source>
</evidence>
<evidence type="ECO:0000305" key="5"/>
<evidence type="ECO:0000305" key="6">
    <source>
    </source>
</evidence>
<dbReference type="EMBL" id="AY591766">
    <property type="protein sequence ID" value="AAT01630.1"/>
    <property type="molecule type" value="mRNA"/>
</dbReference>
<dbReference type="ConoServer" id="857">
    <property type="toxin name" value="Gla-MrIII precursor"/>
</dbReference>
<dbReference type="GO" id="GO:0005576">
    <property type="term" value="C:extracellular region"/>
    <property type="evidence" value="ECO:0007669"/>
    <property type="project" value="UniProtKB-SubCell"/>
</dbReference>
<dbReference type="GO" id="GO:0090729">
    <property type="term" value="F:toxin activity"/>
    <property type="evidence" value="ECO:0007669"/>
    <property type="project" value="UniProtKB-KW"/>
</dbReference>
<dbReference type="InterPro" id="IPR031565">
    <property type="entry name" value="T-conotoxin"/>
</dbReference>
<dbReference type="Pfam" id="PF16981">
    <property type="entry name" value="Chi-conotoxin"/>
    <property type="match status" value="1"/>
</dbReference>
<protein>
    <recommendedName>
        <fullName evidence="4">Conotoxin mr5.2</fullName>
    </recommendedName>
    <alternativeName>
        <fullName evidence="3">Gla-MrIII</fullName>
    </alternativeName>
</protein>
<sequence length="66" mass="7434">MRCVPVFVILLLLIASAPTVDAQLKTKDDMPLASFHANVKRTLQILRDKRFCCRTQEVCCEAIKNG</sequence>
<accession>Q6PN84</accession>
<proteinExistence type="evidence at protein level"/>
<keyword id="KW-0027">Amidation</keyword>
<keyword id="KW-0165">Cleavage on pair of basic residues</keyword>
<keyword id="KW-0903">Direct protein sequencing</keyword>
<keyword id="KW-1015">Disulfide bond</keyword>
<keyword id="KW-0301">Gamma-carboxyglutamic acid</keyword>
<keyword id="KW-0964">Secreted</keyword>
<keyword id="KW-0732">Signal</keyword>
<keyword id="KW-0800">Toxin</keyword>
<name>CT52_CONMR</name>
<reference key="1">
    <citation type="journal article" date="2005" name="Toxicon">
        <title>Sequence diversity of T-superfamily conotoxins from Conus marmoreus.</title>
        <authorList>
            <person name="Han Y.-H."/>
            <person name="Wang Q."/>
            <person name="Jiang H."/>
            <person name="Miao X.-W."/>
            <person name="Chen J.-S."/>
            <person name="Chi C.-W."/>
        </authorList>
    </citation>
    <scope>NUCLEOTIDE SEQUENCE [MRNA]</scope>
    <source>
        <tissue>Venom duct</tissue>
    </source>
</reference>
<reference key="2">
    <citation type="journal article" date="2004" name="Biochem. Biophys. Res. Commun.">
        <title>Isolation and characterization of three novel Gla-containing Conus marmoreus venom peptides, one with a novel cysteine pattern.</title>
        <authorList>
            <person name="Hansson K."/>
            <person name="Furie B."/>
            <person name="Furie B.C."/>
            <person name="Stenflo J."/>
        </authorList>
    </citation>
    <scope>PROTEIN SEQUENCE</scope>
    <scope>AMIDATION AT ASN-65</scope>
    <scope>GAMMA-CARBOXYGLUTAMATION AT GLU-57 AND GLU-61</scope>
    <scope>MASS SPECTROMETRY</scope>
    <scope>SUBCELLULAR LOCATION</scope>
    <source>
        <tissue>Venom</tissue>
    </source>
</reference>
<feature type="signal peptide" evidence="1">
    <location>
        <begin position="1"/>
        <end position="19"/>
    </location>
</feature>
<feature type="propeptide" id="PRO_0000035033" evidence="6">
    <location>
        <begin position="20"/>
        <end position="48"/>
    </location>
</feature>
<feature type="peptide" id="PRO_0000035034" description="Conotoxin mr5.2" evidence="2">
    <location>
        <begin position="51"/>
        <end position="65"/>
    </location>
</feature>
<feature type="modified residue" description="4-carboxyglutamate" evidence="2">
    <location>
        <position position="57"/>
    </location>
</feature>
<feature type="modified residue" description="4-carboxyglutamate" evidence="2">
    <location>
        <position position="61"/>
    </location>
</feature>
<feature type="modified residue" description="Asparagine amide" evidence="2">
    <location>
        <position position="65"/>
    </location>
</feature>